<accession>Q07M58</accession>
<comment type="function">
    <text evidence="1">Catalyzes the cleavage of 5-oxoproline to form L-glutamate coupled to the hydrolysis of ATP to ADP and inorganic phosphate.</text>
</comment>
<comment type="catalytic activity">
    <reaction evidence="1">
        <text>5-oxo-L-proline + ATP + 2 H2O = L-glutamate + ADP + phosphate + H(+)</text>
        <dbReference type="Rhea" id="RHEA:10348"/>
        <dbReference type="ChEBI" id="CHEBI:15377"/>
        <dbReference type="ChEBI" id="CHEBI:15378"/>
        <dbReference type="ChEBI" id="CHEBI:29985"/>
        <dbReference type="ChEBI" id="CHEBI:30616"/>
        <dbReference type="ChEBI" id="CHEBI:43474"/>
        <dbReference type="ChEBI" id="CHEBI:58402"/>
        <dbReference type="ChEBI" id="CHEBI:456216"/>
        <dbReference type="EC" id="3.5.2.9"/>
    </reaction>
</comment>
<comment type="subunit">
    <text evidence="1">Forms a complex composed of PxpA, PxpB and PxpC.</text>
</comment>
<comment type="similarity">
    <text evidence="1">Belongs to the LamB/PxpA family.</text>
</comment>
<gene>
    <name evidence="1" type="primary">pxpA</name>
    <name type="ordered locus">RPE_3039</name>
</gene>
<organism>
    <name type="scientific">Rhodopseudomonas palustris (strain BisA53)</name>
    <dbReference type="NCBI Taxonomy" id="316055"/>
    <lineage>
        <taxon>Bacteria</taxon>
        <taxon>Pseudomonadati</taxon>
        <taxon>Pseudomonadota</taxon>
        <taxon>Alphaproteobacteria</taxon>
        <taxon>Hyphomicrobiales</taxon>
        <taxon>Nitrobacteraceae</taxon>
        <taxon>Rhodopseudomonas</taxon>
    </lineage>
</organism>
<evidence type="ECO:0000255" key="1">
    <source>
        <dbReference type="HAMAP-Rule" id="MF_00691"/>
    </source>
</evidence>
<proteinExistence type="inferred from homology"/>
<keyword id="KW-0067">ATP-binding</keyword>
<keyword id="KW-0378">Hydrolase</keyword>
<keyword id="KW-0547">Nucleotide-binding</keyword>
<reference key="1">
    <citation type="submission" date="2006-09" db="EMBL/GenBank/DDBJ databases">
        <title>Complete sequence of Rhodopseudomonas palustris BisA53.</title>
        <authorList>
            <consortium name="US DOE Joint Genome Institute"/>
            <person name="Copeland A."/>
            <person name="Lucas S."/>
            <person name="Lapidus A."/>
            <person name="Barry K."/>
            <person name="Detter J.C."/>
            <person name="Glavina del Rio T."/>
            <person name="Hammon N."/>
            <person name="Israni S."/>
            <person name="Dalin E."/>
            <person name="Tice H."/>
            <person name="Pitluck S."/>
            <person name="Chain P."/>
            <person name="Malfatti S."/>
            <person name="Shin M."/>
            <person name="Vergez L."/>
            <person name="Schmutz J."/>
            <person name="Larimer F."/>
            <person name="Land M."/>
            <person name="Hauser L."/>
            <person name="Pelletier D.A."/>
            <person name="Kyrpides N."/>
            <person name="Kim E."/>
            <person name="Harwood C.S."/>
            <person name="Oda Y."/>
            <person name="Richardson P."/>
        </authorList>
    </citation>
    <scope>NUCLEOTIDE SEQUENCE [LARGE SCALE GENOMIC DNA]</scope>
    <source>
        <strain>BisA53</strain>
    </source>
</reference>
<protein>
    <recommendedName>
        <fullName evidence="1">5-oxoprolinase subunit A</fullName>
        <shortName evidence="1">5-OPase subunit A</shortName>
        <ecNumber evidence="1">3.5.2.9</ecNumber>
    </recommendedName>
    <alternativeName>
        <fullName evidence="1">5-oxoprolinase (ATP-hydrolyzing) subunit A</fullName>
    </alternativeName>
</protein>
<sequence length="255" mass="26508">MTSIDLNCDLGEGFGPWQMGNDAAMIELATSVNIACGFHAGDADIMHQTVKLAKARGVAVGAHPGFRDLHGFGRRPVPGITAAEIENLVAYQIGALQAVAALAGHKVSHVKAHGALSNVACEDDMTARAIAAAIKAVDPKLVFVVLASSKLQTAGEAAGLTLAHEVFADRAYEDDATLVSRKKPGAVLHDPIEIAERVLRMVQDGAVLSVTGKLIKLRTDTVCIHGDTAGAVEIARGLRARLAQAGITVAPFARG</sequence>
<feature type="chain" id="PRO_1000072745" description="5-oxoprolinase subunit A">
    <location>
        <begin position="1"/>
        <end position="255"/>
    </location>
</feature>
<name>PXPA_RHOP5</name>
<dbReference type="EC" id="3.5.2.9" evidence="1"/>
<dbReference type="EMBL" id="CP000463">
    <property type="protein sequence ID" value="ABJ06976.1"/>
    <property type="molecule type" value="Genomic_DNA"/>
</dbReference>
<dbReference type="SMR" id="Q07M58"/>
<dbReference type="STRING" id="316055.RPE_3039"/>
<dbReference type="KEGG" id="rpe:RPE_3039"/>
<dbReference type="eggNOG" id="COG1540">
    <property type="taxonomic scope" value="Bacteria"/>
</dbReference>
<dbReference type="HOGENOM" id="CLU_069535_0_0_5"/>
<dbReference type="OrthoDB" id="9773478at2"/>
<dbReference type="GO" id="GO:0017168">
    <property type="term" value="F:5-oxoprolinase (ATP-hydrolyzing) activity"/>
    <property type="evidence" value="ECO:0007669"/>
    <property type="project" value="UniProtKB-UniRule"/>
</dbReference>
<dbReference type="GO" id="GO:0005524">
    <property type="term" value="F:ATP binding"/>
    <property type="evidence" value="ECO:0007669"/>
    <property type="project" value="UniProtKB-UniRule"/>
</dbReference>
<dbReference type="GO" id="GO:0005975">
    <property type="term" value="P:carbohydrate metabolic process"/>
    <property type="evidence" value="ECO:0007669"/>
    <property type="project" value="InterPro"/>
</dbReference>
<dbReference type="CDD" id="cd10787">
    <property type="entry name" value="LamB_YcsF_like"/>
    <property type="match status" value="1"/>
</dbReference>
<dbReference type="Gene3D" id="3.20.20.370">
    <property type="entry name" value="Glycoside hydrolase/deacetylase"/>
    <property type="match status" value="1"/>
</dbReference>
<dbReference type="HAMAP" id="MF_00691">
    <property type="entry name" value="PxpA"/>
    <property type="match status" value="1"/>
</dbReference>
<dbReference type="InterPro" id="IPR011330">
    <property type="entry name" value="Glyco_hydro/deAcase_b/a-brl"/>
</dbReference>
<dbReference type="InterPro" id="IPR005501">
    <property type="entry name" value="LamB/YcsF/PxpA-like"/>
</dbReference>
<dbReference type="NCBIfam" id="NF003814">
    <property type="entry name" value="PRK05406.1-3"/>
    <property type="match status" value="1"/>
</dbReference>
<dbReference type="NCBIfam" id="NF003816">
    <property type="entry name" value="PRK05406.1-5"/>
    <property type="match status" value="1"/>
</dbReference>
<dbReference type="PANTHER" id="PTHR30292:SF0">
    <property type="entry name" value="5-OXOPROLINASE SUBUNIT A"/>
    <property type="match status" value="1"/>
</dbReference>
<dbReference type="PANTHER" id="PTHR30292">
    <property type="entry name" value="UNCHARACTERIZED PROTEIN YBGL-RELATED"/>
    <property type="match status" value="1"/>
</dbReference>
<dbReference type="Pfam" id="PF03746">
    <property type="entry name" value="LamB_YcsF"/>
    <property type="match status" value="1"/>
</dbReference>
<dbReference type="SUPFAM" id="SSF88713">
    <property type="entry name" value="Glycoside hydrolase/deacetylase"/>
    <property type="match status" value="1"/>
</dbReference>